<name>RPOC_CHLMU</name>
<evidence type="ECO:0000255" key="1">
    <source>
        <dbReference type="HAMAP-Rule" id="MF_01322"/>
    </source>
</evidence>
<evidence type="ECO:0000305" key="2"/>
<feature type="chain" id="PRO_0000067727" description="DNA-directed RNA polymerase subunit beta'">
    <location>
        <begin position="1"/>
        <end position="1396"/>
    </location>
</feature>
<feature type="binding site" evidence="1">
    <location>
        <position position="72"/>
    </location>
    <ligand>
        <name>Zn(2+)</name>
        <dbReference type="ChEBI" id="CHEBI:29105"/>
        <label>1</label>
    </ligand>
</feature>
<feature type="binding site" evidence="1">
    <location>
        <position position="74"/>
    </location>
    <ligand>
        <name>Zn(2+)</name>
        <dbReference type="ChEBI" id="CHEBI:29105"/>
        <label>1</label>
    </ligand>
</feature>
<feature type="binding site" evidence="1">
    <location>
        <position position="87"/>
    </location>
    <ligand>
        <name>Zn(2+)</name>
        <dbReference type="ChEBI" id="CHEBI:29105"/>
        <label>1</label>
    </ligand>
</feature>
<feature type="binding site" evidence="1">
    <location>
        <position position="90"/>
    </location>
    <ligand>
        <name>Zn(2+)</name>
        <dbReference type="ChEBI" id="CHEBI:29105"/>
        <label>1</label>
    </ligand>
</feature>
<feature type="binding site" evidence="1">
    <location>
        <position position="463"/>
    </location>
    <ligand>
        <name>Mg(2+)</name>
        <dbReference type="ChEBI" id="CHEBI:18420"/>
    </ligand>
</feature>
<feature type="binding site" evidence="1">
    <location>
        <position position="465"/>
    </location>
    <ligand>
        <name>Mg(2+)</name>
        <dbReference type="ChEBI" id="CHEBI:18420"/>
    </ligand>
</feature>
<feature type="binding site" evidence="1">
    <location>
        <position position="467"/>
    </location>
    <ligand>
        <name>Mg(2+)</name>
        <dbReference type="ChEBI" id="CHEBI:18420"/>
    </ligand>
</feature>
<feature type="binding site" evidence="1">
    <location>
        <position position="814"/>
    </location>
    <ligand>
        <name>Zn(2+)</name>
        <dbReference type="ChEBI" id="CHEBI:29105"/>
        <label>2</label>
    </ligand>
</feature>
<feature type="binding site" evidence="1">
    <location>
        <position position="889"/>
    </location>
    <ligand>
        <name>Zn(2+)</name>
        <dbReference type="ChEBI" id="CHEBI:29105"/>
        <label>2</label>
    </ligand>
</feature>
<feature type="binding site" evidence="1">
    <location>
        <position position="896"/>
    </location>
    <ligand>
        <name>Zn(2+)</name>
        <dbReference type="ChEBI" id="CHEBI:29105"/>
        <label>2</label>
    </ligand>
</feature>
<feature type="binding site" evidence="1">
    <location>
        <position position="899"/>
    </location>
    <ligand>
        <name>Zn(2+)</name>
        <dbReference type="ChEBI" id="CHEBI:29105"/>
        <label>2</label>
    </ligand>
</feature>
<feature type="sequence conflict" description="In Ref. 2; no nucleotide entry." evidence="2" ref="2">
    <original>VL</original>
    <variation>EK</variation>
    <location>
        <begin position="129"/>
        <end position="130"/>
    </location>
</feature>
<gene>
    <name evidence="1" type="primary">rpoC</name>
    <name type="ordered locus">TC_0588</name>
</gene>
<keyword id="KW-0240">DNA-directed RNA polymerase</keyword>
<keyword id="KW-0460">Magnesium</keyword>
<keyword id="KW-0479">Metal-binding</keyword>
<keyword id="KW-0548">Nucleotidyltransferase</keyword>
<keyword id="KW-0804">Transcription</keyword>
<keyword id="KW-0808">Transferase</keyword>
<keyword id="KW-0862">Zinc</keyword>
<reference key="1">
    <citation type="journal article" date="2000" name="Nucleic Acids Res.">
        <title>Genome sequences of Chlamydia trachomatis MoPn and Chlamydia pneumoniae AR39.</title>
        <authorList>
            <person name="Read T.D."/>
            <person name="Brunham R.C."/>
            <person name="Shen C."/>
            <person name="Gill S.R."/>
            <person name="Heidelberg J.F."/>
            <person name="White O."/>
            <person name="Hickey E.K."/>
            <person name="Peterson J.D."/>
            <person name="Utterback T.R."/>
            <person name="Berry K.J."/>
            <person name="Bass S."/>
            <person name="Linher K.D."/>
            <person name="Weidman J.F."/>
            <person name="Khouri H.M."/>
            <person name="Craven B."/>
            <person name="Bowman C."/>
            <person name="Dodson R.J."/>
            <person name="Gwinn M.L."/>
            <person name="Nelson W.C."/>
            <person name="DeBoy R.T."/>
            <person name="Kolonay J.F."/>
            <person name="McClarty G."/>
            <person name="Salzberg S.L."/>
            <person name="Eisen J.A."/>
            <person name="Fraser C.M."/>
        </authorList>
    </citation>
    <scope>NUCLEOTIDE SEQUENCE [LARGE SCALE GENOMIC DNA]</scope>
    <source>
        <strain>MoPn / Nigg</strain>
    </source>
</reference>
<reference key="2">
    <citation type="journal article" date="1990" name="J. Bacteriol.">
        <title>Cloning and characterization of RNA polymerase core subunits of Chlamydia trachomatis by using the polymerase chain reaction.</title>
        <authorList>
            <person name="Engel J.N."/>
            <person name="Pollack J."/>
            <person name="Malik F."/>
            <person name="Ganem D."/>
        </authorList>
    </citation>
    <scope>NUCLEOTIDE SEQUENCE [GENOMIC DNA] OF 124-239</scope>
    <source>
        <strain>MoPn</strain>
    </source>
</reference>
<comment type="function">
    <text evidence="1">DNA-dependent RNA polymerase catalyzes the transcription of DNA into RNA using the four ribonucleoside triphosphates as substrates.</text>
</comment>
<comment type="catalytic activity">
    <reaction evidence="1">
        <text>RNA(n) + a ribonucleoside 5'-triphosphate = RNA(n+1) + diphosphate</text>
        <dbReference type="Rhea" id="RHEA:21248"/>
        <dbReference type="Rhea" id="RHEA-COMP:14527"/>
        <dbReference type="Rhea" id="RHEA-COMP:17342"/>
        <dbReference type="ChEBI" id="CHEBI:33019"/>
        <dbReference type="ChEBI" id="CHEBI:61557"/>
        <dbReference type="ChEBI" id="CHEBI:140395"/>
        <dbReference type="EC" id="2.7.7.6"/>
    </reaction>
</comment>
<comment type="cofactor">
    <cofactor evidence="1">
        <name>Mg(2+)</name>
        <dbReference type="ChEBI" id="CHEBI:18420"/>
    </cofactor>
    <text evidence="1">Binds 1 Mg(2+) ion per subunit.</text>
</comment>
<comment type="cofactor">
    <cofactor evidence="1">
        <name>Zn(2+)</name>
        <dbReference type="ChEBI" id="CHEBI:29105"/>
    </cofactor>
    <text evidence="1">Binds 2 Zn(2+) ions per subunit.</text>
</comment>
<comment type="subunit">
    <text evidence="1">The RNAP catalytic core consists of 2 alpha, 1 beta, 1 beta' and 1 omega subunit. When a sigma factor is associated with the core the holoenzyme is formed, which can initiate transcription.</text>
</comment>
<comment type="similarity">
    <text evidence="1">Belongs to the RNA polymerase beta' chain family.</text>
</comment>
<sequence length="1396" mass="154899">MFKEGSRDDAALAKEGLFDKLEIGIASDVTIRDKWSCGEIKKPETINYRTFKPEKGGLFCEKIFGPTKDWECYCGKYKKIKHKGIVCDRCGVEVTLSKVRRERMAHIELAVPIVHIWFFKTTPSRIGNVLGMTASDLERVIYYEEYVVIDPGNTDLVKKQLLNDAKYREVVEKWGKDAFVAKMGGEAVYDLLKSEDLESLLGELKDRLRKTKSQQARMKLAKRLKIVEGFVSSSNRPEWMVLKNIPVVPPDLRPLVPLDGGRFATSDLNDLYRRVINRNNRLKAILRLKTPEVIVRNEKRMLQEAVDALFDNGRHGHPVMGAGNRPLKSLSEMLKGKNGRFRQNLLGKRVDYSGRSVIIVGPELKFNQCGLPKEMALELFEPFIIKRLKDQGSVYTIRSAKKMIQRGAPEVWDVLEEIIKGHPVLLNRAPTLHRLGIQAFEPVLIEGKAIRVHPLVCAAFNADFDGDQMAVHVPLSIEAQLEAKVLMMAPDNIFLPSSGKPVATPSKDMTLGIYYLMADPTYFPEEHGGKTKVFKDEVEVLRALNAGGFILKDEICGSRRDETGRGIHIHEAIKVRIDGQIIETTPGRVFFNTIVPKELGFQNYSMPSKRISELILQCYKKVGLEATVRFLDDLKELGFVQSTKAAISMGLKDVRIPEIKKEILKDAYDKVAVVKKQYEDGIITDGERHSKTISIWTEVSDLLSNALYAEIKKQTNSKHNPLFLMIDSGARGNKSQLKQLGALRGLMAKPNGAIIESPITSNFREGLTVLEYSISSHGARKGLADTALKTADSGYLTRRLVDVAQDVIITEKDCGTLNHIEVSTIRQGSEELLPLKDRIYGRTVSENVYQPGDKSNVLAYAGDVLTSSQAEAIDDAGIDSVKIRSTLTCESRRGVCAKCYGLNLANGRLIGLGEAVGIIAAQSIGEPGTQLTMRTFHLGGIAATSSTPEIVAECDGILVYLDLRFVVDQEGNNLVLNKMGALHLVRDEGRSLSEYKKLLSTKSIESLATFPVELGAKILVDDGAAVTAGQRIAEVELHNIPIICDKPGFVHYEDLVEGVSTEKVTNKNTGLVELIVKQHRGELHPQIAIYADANMQELVGTYAIPSGAIISVEEGQRIAPGMLLARLPRGAIKTKDITGGLPRVAELVEARKPEDAADIAKIDGVVDFKGIQKNKRILVVRDEVTGMEEEHLISLTKHLIVQRGDSVIKGQQLTDGLVVPHEILEICGVRELQKYLVNEVQEVYRLQGVDINDKHIEIIVRQMLQKVRITDPGDTTLLFGEDVDKKEFYEENRRTEEDGGKPAQAVPVLLGITKASLGTESFISAASFQDTTRVLTDAACSSKTDYLLGFKENVIMGHMIPGGTGFDTHKRIKQHLEKEQEDLVFDFDSEFESVAG</sequence>
<protein>
    <recommendedName>
        <fullName evidence="1">DNA-directed RNA polymerase subunit beta'</fullName>
        <shortName evidence="1">RNAP subunit beta'</shortName>
        <ecNumber evidence="1">2.7.7.6</ecNumber>
    </recommendedName>
    <alternativeName>
        <fullName evidence="1">RNA polymerase subunit beta'</fullName>
    </alternativeName>
    <alternativeName>
        <fullName evidence="1">Transcriptase subunit beta'</fullName>
    </alternativeName>
</protein>
<organism>
    <name type="scientific">Chlamydia muridarum (strain MoPn / Nigg)</name>
    <dbReference type="NCBI Taxonomy" id="243161"/>
    <lineage>
        <taxon>Bacteria</taxon>
        <taxon>Pseudomonadati</taxon>
        <taxon>Chlamydiota</taxon>
        <taxon>Chlamydiia</taxon>
        <taxon>Chlamydiales</taxon>
        <taxon>Chlamydiaceae</taxon>
        <taxon>Chlamydia/Chlamydophila group</taxon>
        <taxon>Chlamydia</taxon>
    </lineage>
</organism>
<accession>Q9PK79</accession>
<proteinExistence type="inferred from homology"/>
<dbReference type="EC" id="2.7.7.6" evidence="1"/>
<dbReference type="EMBL" id="AE002160">
    <property type="protein sequence ID" value="AAF39420.1"/>
    <property type="molecule type" value="Genomic_DNA"/>
</dbReference>
<dbReference type="PIR" id="F81686">
    <property type="entry name" value="F81686"/>
</dbReference>
<dbReference type="RefSeq" id="WP_010230914.1">
    <property type="nucleotide sequence ID" value="NZ_CP063055.1"/>
</dbReference>
<dbReference type="SMR" id="Q9PK79"/>
<dbReference type="GeneID" id="1245947"/>
<dbReference type="KEGG" id="cmu:TC_0588"/>
<dbReference type="eggNOG" id="COG0086">
    <property type="taxonomic scope" value="Bacteria"/>
</dbReference>
<dbReference type="HOGENOM" id="CLU_000524_3_1_0"/>
<dbReference type="OrthoDB" id="9815296at2"/>
<dbReference type="Proteomes" id="UP000000800">
    <property type="component" value="Chromosome"/>
</dbReference>
<dbReference type="GO" id="GO:0000428">
    <property type="term" value="C:DNA-directed RNA polymerase complex"/>
    <property type="evidence" value="ECO:0007669"/>
    <property type="project" value="UniProtKB-KW"/>
</dbReference>
<dbReference type="GO" id="GO:0003677">
    <property type="term" value="F:DNA binding"/>
    <property type="evidence" value="ECO:0007669"/>
    <property type="project" value="UniProtKB-UniRule"/>
</dbReference>
<dbReference type="GO" id="GO:0003899">
    <property type="term" value="F:DNA-directed RNA polymerase activity"/>
    <property type="evidence" value="ECO:0007669"/>
    <property type="project" value="UniProtKB-UniRule"/>
</dbReference>
<dbReference type="GO" id="GO:0000287">
    <property type="term" value="F:magnesium ion binding"/>
    <property type="evidence" value="ECO:0007669"/>
    <property type="project" value="UniProtKB-UniRule"/>
</dbReference>
<dbReference type="GO" id="GO:0008270">
    <property type="term" value="F:zinc ion binding"/>
    <property type="evidence" value="ECO:0007669"/>
    <property type="project" value="UniProtKB-UniRule"/>
</dbReference>
<dbReference type="GO" id="GO:0006351">
    <property type="term" value="P:DNA-templated transcription"/>
    <property type="evidence" value="ECO:0007669"/>
    <property type="project" value="UniProtKB-UniRule"/>
</dbReference>
<dbReference type="CDD" id="cd02655">
    <property type="entry name" value="RNAP_beta'_C"/>
    <property type="match status" value="1"/>
</dbReference>
<dbReference type="CDD" id="cd01609">
    <property type="entry name" value="RNAP_beta'_N"/>
    <property type="match status" value="1"/>
</dbReference>
<dbReference type="Gene3D" id="1.10.132.30">
    <property type="match status" value="1"/>
</dbReference>
<dbReference type="Gene3D" id="1.10.150.390">
    <property type="match status" value="1"/>
</dbReference>
<dbReference type="Gene3D" id="1.10.1790.20">
    <property type="match status" value="1"/>
</dbReference>
<dbReference type="Gene3D" id="1.10.40.90">
    <property type="match status" value="1"/>
</dbReference>
<dbReference type="Gene3D" id="2.40.40.20">
    <property type="match status" value="1"/>
</dbReference>
<dbReference type="Gene3D" id="2.40.50.100">
    <property type="match status" value="3"/>
</dbReference>
<dbReference type="Gene3D" id="4.10.860.120">
    <property type="entry name" value="RNA polymerase II, clamp domain"/>
    <property type="match status" value="1"/>
</dbReference>
<dbReference type="Gene3D" id="1.10.274.100">
    <property type="entry name" value="RNA polymerase Rpb1, domain 3"/>
    <property type="match status" value="1"/>
</dbReference>
<dbReference type="HAMAP" id="MF_01322">
    <property type="entry name" value="RNApol_bact_RpoC"/>
    <property type="match status" value="1"/>
</dbReference>
<dbReference type="InterPro" id="IPR045867">
    <property type="entry name" value="DNA-dir_RpoC_beta_prime"/>
</dbReference>
<dbReference type="InterPro" id="IPR012754">
    <property type="entry name" value="DNA-dir_RpoC_beta_prime_bact"/>
</dbReference>
<dbReference type="InterPro" id="IPR000722">
    <property type="entry name" value="RNA_pol_asu"/>
</dbReference>
<dbReference type="InterPro" id="IPR006592">
    <property type="entry name" value="RNA_pol_N"/>
</dbReference>
<dbReference type="InterPro" id="IPR007080">
    <property type="entry name" value="RNA_pol_Rpb1_1"/>
</dbReference>
<dbReference type="InterPro" id="IPR007066">
    <property type="entry name" value="RNA_pol_Rpb1_3"/>
</dbReference>
<dbReference type="InterPro" id="IPR042102">
    <property type="entry name" value="RNA_pol_Rpb1_3_sf"/>
</dbReference>
<dbReference type="InterPro" id="IPR007083">
    <property type="entry name" value="RNA_pol_Rpb1_4"/>
</dbReference>
<dbReference type="InterPro" id="IPR007081">
    <property type="entry name" value="RNA_pol_Rpb1_5"/>
</dbReference>
<dbReference type="InterPro" id="IPR044893">
    <property type="entry name" value="RNA_pol_Rpb1_clamp_domain"/>
</dbReference>
<dbReference type="InterPro" id="IPR038120">
    <property type="entry name" value="Rpb1_funnel_sf"/>
</dbReference>
<dbReference type="NCBIfam" id="TIGR02386">
    <property type="entry name" value="rpoC_TIGR"/>
    <property type="match status" value="1"/>
</dbReference>
<dbReference type="PANTHER" id="PTHR19376">
    <property type="entry name" value="DNA-DIRECTED RNA POLYMERASE"/>
    <property type="match status" value="1"/>
</dbReference>
<dbReference type="PANTHER" id="PTHR19376:SF54">
    <property type="entry name" value="DNA-DIRECTED RNA POLYMERASE SUBUNIT BETA"/>
    <property type="match status" value="1"/>
</dbReference>
<dbReference type="Pfam" id="PF04997">
    <property type="entry name" value="RNA_pol_Rpb1_1"/>
    <property type="match status" value="1"/>
</dbReference>
<dbReference type="Pfam" id="PF00623">
    <property type="entry name" value="RNA_pol_Rpb1_2"/>
    <property type="match status" value="1"/>
</dbReference>
<dbReference type="Pfam" id="PF04983">
    <property type="entry name" value="RNA_pol_Rpb1_3"/>
    <property type="match status" value="1"/>
</dbReference>
<dbReference type="Pfam" id="PF05000">
    <property type="entry name" value="RNA_pol_Rpb1_4"/>
    <property type="match status" value="1"/>
</dbReference>
<dbReference type="Pfam" id="PF04998">
    <property type="entry name" value="RNA_pol_Rpb1_5"/>
    <property type="match status" value="1"/>
</dbReference>
<dbReference type="SMART" id="SM00663">
    <property type="entry name" value="RPOLA_N"/>
    <property type="match status" value="1"/>
</dbReference>
<dbReference type="SUPFAM" id="SSF64484">
    <property type="entry name" value="beta and beta-prime subunits of DNA dependent RNA-polymerase"/>
    <property type="match status" value="1"/>
</dbReference>